<keyword id="KW-1185">Reference proteome</keyword>
<gene>
    <name type="ordered locus">BA_3449</name>
    <name type="ordered locus">GBAA_3449</name>
    <name type="ordered locus">BAS3196</name>
</gene>
<name>Y3449_BACAN</name>
<reference key="1">
    <citation type="journal article" date="2003" name="Nature">
        <title>The genome sequence of Bacillus anthracis Ames and comparison to closely related bacteria.</title>
        <authorList>
            <person name="Read T.D."/>
            <person name="Peterson S.N."/>
            <person name="Tourasse N.J."/>
            <person name="Baillie L.W."/>
            <person name="Paulsen I.T."/>
            <person name="Nelson K.E."/>
            <person name="Tettelin H."/>
            <person name="Fouts D.E."/>
            <person name="Eisen J.A."/>
            <person name="Gill S.R."/>
            <person name="Holtzapple E.K."/>
            <person name="Okstad O.A."/>
            <person name="Helgason E."/>
            <person name="Rilstone J."/>
            <person name="Wu M."/>
            <person name="Kolonay J.F."/>
            <person name="Beanan M.J."/>
            <person name="Dodson R.J."/>
            <person name="Brinkac L.M."/>
            <person name="Gwinn M.L."/>
            <person name="DeBoy R.T."/>
            <person name="Madpu R."/>
            <person name="Daugherty S.C."/>
            <person name="Durkin A.S."/>
            <person name="Haft D.H."/>
            <person name="Nelson W.C."/>
            <person name="Peterson J.D."/>
            <person name="Pop M."/>
            <person name="Khouri H.M."/>
            <person name="Radune D."/>
            <person name="Benton J.L."/>
            <person name="Mahamoud Y."/>
            <person name="Jiang L."/>
            <person name="Hance I.R."/>
            <person name="Weidman J.F."/>
            <person name="Berry K.J."/>
            <person name="Plaut R.D."/>
            <person name="Wolf A.M."/>
            <person name="Watkins K.L."/>
            <person name="Nierman W.C."/>
            <person name="Hazen A."/>
            <person name="Cline R.T."/>
            <person name="Redmond C."/>
            <person name="Thwaite J.E."/>
            <person name="White O."/>
            <person name="Salzberg S.L."/>
            <person name="Thomason B."/>
            <person name="Friedlander A.M."/>
            <person name="Koehler T.M."/>
            <person name="Hanna P.C."/>
            <person name="Kolstoe A.-B."/>
            <person name="Fraser C.M."/>
        </authorList>
    </citation>
    <scope>NUCLEOTIDE SEQUENCE [LARGE SCALE GENOMIC DNA]</scope>
    <source>
        <strain>Ames / isolate Porton</strain>
    </source>
</reference>
<reference key="2">
    <citation type="journal article" date="2009" name="J. Bacteriol.">
        <title>The complete genome sequence of Bacillus anthracis Ames 'Ancestor'.</title>
        <authorList>
            <person name="Ravel J."/>
            <person name="Jiang L."/>
            <person name="Stanley S.T."/>
            <person name="Wilson M.R."/>
            <person name="Decker R.S."/>
            <person name="Read T.D."/>
            <person name="Worsham P."/>
            <person name="Keim P.S."/>
            <person name="Salzberg S.L."/>
            <person name="Fraser-Liggett C.M."/>
            <person name="Rasko D.A."/>
        </authorList>
    </citation>
    <scope>NUCLEOTIDE SEQUENCE [LARGE SCALE GENOMIC DNA]</scope>
    <source>
        <strain>Ames ancestor</strain>
    </source>
</reference>
<reference key="3">
    <citation type="submission" date="2004-01" db="EMBL/GenBank/DDBJ databases">
        <title>Complete genome sequence of Bacillus anthracis Sterne.</title>
        <authorList>
            <person name="Brettin T.S."/>
            <person name="Bruce D."/>
            <person name="Challacombe J.F."/>
            <person name="Gilna P."/>
            <person name="Han C."/>
            <person name="Hill K."/>
            <person name="Hitchcock P."/>
            <person name="Jackson P."/>
            <person name="Keim P."/>
            <person name="Longmire J."/>
            <person name="Lucas S."/>
            <person name="Okinaka R."/>
            <person name="Richardson P."/>
            <person name="Rubin E."/>
            <person name="Tice H."/>
        </authorList>
    </citation>
    <scope>NUCLEOTIDE SEQUENCE [LARGE SCALE GENOMIC DNA]</scope>
    <source>
        <strain>Sterne</strain>
    </source>
</reference>
<accession>Q81MX1</accession>
<accession>Q6HW35</accession>
<accession>Q6KQ91</accession>
<sequence length="158" mass="17915">MSSSNLNEISKQILKEEETLQFSSFTNEDALQLGLFIVETAKQEGKVIAVDITKNGVQLFHFKMTGTNEENTKWIERKKRVVSLHDRSSYYMQIQSEITGISYNEKYLLNTSEYAAFGGCFPIRVKNVGVIGMITVSGLPPEEDHELVIRAVKNHLNQ</sequence>
<protein>
    <recommendedName>
        <fullName evidence="1">UPF0303 protein BA_3449/GBAA_3449/BAS3196</fullName>
    </recommendedName>
</protein>
<proteinExistence type="inferred from homology"/>
<feature type="chain" id="PRO_0000208913" description="UPF0303 protein BA_3449/GBAA_3449/BAS3196">
    <location>
        <begin position="1"/>
        <end position="158"/>
    </location>
</feature>
<comment type="similarity">
    <text evidence="1">Belongs to the UPF0303 family.</text>
</comment>
<comment type="sequence caution" evidence="2">
    <conflict type="erroneous initiation">
        <sequence resource="EMBL-CDS" id="AAT55504"/>
    </conflict>
</comment>
<evidence type="ECO:0000255" key="1">
    <source>
        <dbReference type="HAMAP-Rule" id="MF_00761"/>
    </source>
</evidence>
<evidence type="ECO:0000305" key="2"/>
<organism>
    <name type="scientific">Bacillus anthracis</name>
    <dbReference type="NCBI Taxonomy" id="1392"/>
    <lineage>
        <taxon>Bacteria</taxon>
        <taxon>Bacillati</taxon>
        <taxon>Bacillota</taxon>
        <taxon>Bacilli</taxon>
        <taxon>Bacillales</taxon>
        <taxon>Bacillaceae</taxon>
        <taxon>Bacillus</taxon>
        <taxon>Bacillus cereus group</taxon>
    </lineage>
</organism>
<dbReference type="EMBL" id="AE016879">
    <property type="protein sequence ID" value="AAP27218.1"/>
    <property type="molecule type" value="Genomic_DNA"/>
</dbReference>
<dbReference type="EMBL" id="AE017334">
    <property type="protein sequence ID" value="AAT32557.2"/>
    <property type="molecule type" value="Genomic_DNA"/>
</dbReference>
<dbReference type="EMBL" id="AE017225">
    <property type="protein sequence ID" value="AAT55504.1"/>
    <property type="status" value="ALT_INIT"/>
    <property type="molecule type" value="Genomic_DNA"/>
</dbReference>
<dbReference type="RefSeq" id="NP_845732.1">
    <property type="nucleotide sequence ID" value="NC_003997.3"/>
</dbReference>
<dbReference type="SMR" id="Q81MX1"/>
<dbReference type="STRING" id="261594.GBAA_3449"/>
<dbReference type="DNASU" id="1085620"/>
<dbReference type="KEGG" id="ban:BA_3449"/>
<dbReference type="KEGG" id="bar:GBAA_3449"/>
<dbReference type="KEGG" id="bat:BAS3196"/>
<dbReference type="PATRIC" id="fig|198094.11.peg.3423"/>
<dbReference type="eggNOG" id="COG4702">
    <property type="taxonomic scope" value="Bacteria"/>
</dbReference>
<dbReference type="HOGENOM" id="CLU_101036_2_0_9"/>
<dbReference type="OMA" id="AWIDRKR"/>
<dbReference type="Proteomes" id="UP000000427">
    <property type="component" value="Chromosome"/>
</dbReference>
<dbReference type="Proteomes" id="UP000000594">
    <property type="component" value="Chromosome"/>
</dbReference>
<dbReference type="FunFam" id="3.30.450.150:FF:000002">
    <property type="entry name" value="UPF0303 protein BCAH820_3413"/>
    <property type="match status" value="1"/>
</dbReference>
<dbReference type="Gene3D" id="3.30.450.150">
    <property type="entry name" value="Haem-degrading domain"/>
    <property type="match status" value="1"/>
</dbReference>
<dbReference type="HAMAP" id="MF_00761">
    <property type="entry name" value="UPF0303"/>
    <property type="match status" value="1"/>
</dbReference>
<dbReference type="InterPro" id="IPR005624">
    <property type="entry name" value="PduO/GlcC-like"/>
</dbReference>
<dbReference type="InterPro" id="IPR038084">
    <property type="entry name" value="PduO/GlcC-like_sf"/>
</dbReference>
<dbReference type="InterPro" id="IPR010371">
    <property type="entry name" value="YBR137W-like"/>
</dbReference>
<dbReference type="NCBIfam" id="NF002692">
    <property type="entry name" value="PRK02487.1-1"/>
    <property type="match status" value="1"/>
</dbReference>
<dbReference type="NCBIfam" id="NF002696">
    <property type="entry name" value="PRK02487.1-5"/>
    <property type="match status" value="1"/>
</dbReference>
<dbReference type="PANTHER" id="PTHR28255">
    <property type="match status" value="1"/>
</dbReference>
<dbReference type="PANTHER" id="PTHR28255:SF1">
    <property type="entry name" value="UPF0303 PROTEIN YBR137W"/>
    <property type="match status" value="1"/>
</dbReference>
<dbReference type="Pfam" id="PF03928">
    <property type="entry name" value="HbpS-like"/>
    <property type="match status" value="1"/>
</dbReference>
<dbReference type="PIRSF" id="PIRSF008757">
    <property type="entry name" value="UCP008757"/>
    <property type="match status" value="1"/>
</dbReference>
<dbReference type="SUPFAM" id="SSF143744">
    <property type="entry name" value="GlcG-like"/>
    <property type="match status" value="1"/>
</dbReference>